<name>AROB_HISS1</name>
<protein>
    <recommendedName>
        <fullName evidence="1">3-dehydroquinate synthase</fullName>
        <shortName evidence="1">DHQS</shortName>
        <ecNumber evidence="1">4.2.3.4</ecNumber>
    </recommendedName>
</protein>
<feature type="chain" id="PRO_1000094528" description="3-dehydroquinate synthase">
    <location>
        <begin position="1"/>
        <end position="362"/>
    </location>
</feature>
<feature type="binding site" evidence="1">
    <location>
        <begin position="70"/>
        <end position="75"/>
    </location>
    <ligand>
        <name>NAD(+)</name>
        <dbReference type="ChEBI" id="CHEBI:57540"/>
    </ligand>
</feature>
<feature type="binding site" evidence="1">
    <location>
        <begin position="104"/>
        <end position="108"/>
    </location>
    <ligand>
        <name>NAD(+)</name>
        <dbReference type="ChEBI" id="CHEBI:57540"/>
    </ligand>
</feature>
<feature type="binding site" evidence="1">
    <location>
        <begin position="128"/>
        <end position="129"/>
    </location>
    <ligand>
        <name>NAD(+)</name>
        <dbReference type="ChEBI" id="CHEBI:57540"/>
    </ligand>
</feature>
<feature type="binding site" evidence="1">
    <location>
        <position position="141"/>
    </location>
    <ligand>
        <name>NAD(+)</name>
        <dbReference type="ChEBI" id="CHEBI:57540"/>
    </ligand>
</feature>
<feature type="binding site" evidence="1">
    <location>
        <position position="150"/>
    </location>
    <ligand>
        <name>NAD(+)</name>
        <dbReference type="ChEBI" id="CHEBI:57540"/>
    </ligand>
</feature>
<feature type="binding site" evidence="1">
    <location>
        <begin position="168"/>
        <end position="171"/>
    </location>
    <ligand>
        <name>NAD(+)</name>
        <dbReference type="ChEBI" id="CHEBI:57540"/>
    </ligand>
</feature>
<feature type="binding site" evidence="1">
    <location>
        <position position="183"/>
    </location>
    <ligand>
        <name>Zn(2+)</name>
        <dbReference type="ChEBI" id="CHEBI:29105"/>
    </ligand>
</feature>
<feature type="binding site" evidence="1">
    <location>
        <position position="246"/>
    </location>
    <ligand>
        <name>Zn(2+)</name>
        <dbReference type="ChEBI" id="CHEBI:29105"/>
    </ligand>
</feature>
<feature type="binding site" evidence="1">
    <location>
        <position position="263"/>
    </location>
    <ligand>
        <name>Zn(2+)</name>
        <dbReference type="ChEBI" id="CHEBI:29105"/>
    </ligand>
</feature>
<organism>
    <name type="scientific">Histophilus somni (strain 129Pt)</name>
    <name type="common">Haemophilus somnus</name>
    <dbReference type="NCBI Taxonomy" id="205914"/>
    <lineage>
        <taxon>Bacteria</taxon>
        <taxon>Pseudomonadati</taxon>
        <taxon>Pseudomonadota</taxon>
        <taxon>Gammaproteobacteria</taxon>
        <taxon>Pasteurellales</taxon>
        <taxon>Pasteurellaceae</taxon>
        <taxon>Histophilus</taxon>
    </lineage>
</organism>
<gene>
    <name evidence="1" type="primary">aroB</name>
    <name type="ordered locus">HS_1114</name>
</gene>
<dbReference type="EC" id="4.2.3.4" evidence="1"/>
<dbReference type="EMBL" id="CP000436">
    <property type="protein sequence ID" value="ABI25389.1"/>
    <property type="molecule type" value="Genomic_DNA"/>
</dbReference>
<dbReference type="SMR" id="Q0I432"/>
<dbReference type="KEGG" id="hso:HS_1114"/>
<dbReference type="eggNOG" id="COG0337">
    <property type="taxonomic scope" value="Bacteria"/>
</dbReference>
<dbReference type="HOGENOM" id="CLU_001201_0_2_6"/>
<dbReference type="UniPathway" id="UPA00053">
    <property type="reaction ID" value="UER00085"/>
</dbReference>
<dbReference type="GO" id="GO:0005737">
    <property type="term" value="C:cytoplasm"/>
    <property type="evidence" value="ECO:0007669"/>
    <property type="project" value="UniProtKB-SubCell"/>
</dbReference>
<dbReference type="GO" id="GO:0003856">
    <property type="term" value="F:3-dehydroquinate synthase activity"/>
    <property type="evidence" value="ECO:0007669"/>
    <property type="project" value="UniProtKB-UniRule"/>
</dbReference>
<dbReference type="GO" id="GO:0046872">
    <property type="term" value="F:metal ion binding"/>
    <property type="evidence" value="ECO:0007669"/>
    <property type="project" value="UniProtKB-KW"/>
</dbReference>
<dbReference type="GO" id="GO:0000166">
    <property type="term" value="F:nucleotide binding"/>
    <property type="evidence" value="ECO:0007669"/>
    <property type="project" value="UniProtKB-KW"/>
</dbReference>
<dbReference type="GO" id="GO:0008652">
    <property type="term" value="P:amino acid biosynthetic process"/>
    <property type="evidence" value="ECO:0007669"/>
    <property type="project" value="UniProtKB-KW"/>
</dbReference>
<dbReference type="GO" id="GO:0009073">
    <property type="term" value="P:aromatic amino acid family biosynthetic process"/>
    <property type="evidence" value="ECO:0007669"/>
    <property type="project" value="UniProtKB-KW"/>
</dbReference>
<dbReference type="GO" id="GO:0009423">
    <property type="term" value="P:chorismate biosynthetic process"/>
    <property type="evidence" value="ECO:0007669"/>
    <property type="project" value="UniProtKB-UniRule"/>
</dbReference>
<dbReference type="CDD" id="cd08195">
    <property type="entry name" value="DHQS"/>
    <property type="match status" value="1"/>
</dbReference>
<dbReference type="FunFam" id="1.20.1090.10:FF:000002">
    <property type="entry name" value="3-dehydroquinate synthase"/>
    <property type="match status" value="1"/>
</dbReference>
<dbReference type="FunFam" id="3.40.50.1970:FF:000001">
    <property type="entry name" value="3-dehydroquinate synthase"/>
    <property type="match status" value="1"/>
</dbReference>
<dbReference type="Gene3D" id="3.40.50.1970">
    <property type="match status" value="1"/>
</dbReference>
<dbReference type="Gene3D" id="1.20.1090.10">
    <property type="entry name" value="Dehydroquinate synthase-like - alpha domain"/>
    <property type="match status" value="1"/>
</dbReference>
<dbReference type="HAMAP" id="MF_00110">
    <property type="entry name" value="DHQ_synthase"/>
    <property type="match status" value="1"/>
</dbReference>
<dbReference type="InterPro" id="IPR050071">
    <property type="entry name" value="Dehydroquinate_synthase"/>
</dbReference>
<dbReference type="InterPro" id="IPR016037">
    <property type="entry name" value="DHQ_synth_AroB"/>
</dbReference>
<dbReference type="InterPro" id="IPR030963">
    <property type="entry name" value="DHQ_synth_fam"/>
</dbReference>
<dbReference type="InterPro" id="IPR030960">
    <property type="entry name" value="DHQS/DOIS_N"/>
</dbReference>
<dbReference type="InterPro" id="IPR056179">
    <property type="entry name" value="DHQS_C"/>
</dbReference>
<dbReference type="NCBIfam" id="TIGR01357">
    <property type="entry name" value="aroB"/>
    <property type="match status" value="1"/>
</dbReference>
<dbReference type="PANTHER" id="PTHR43622">
    <property type="entry name" value="3-DEHYDROQUINATE SYNTHASE"/>
    <property type="match status" value="1"/>
</dbReference>
<dbReference type="PANTHER" id="PTHR43622:SF7">
    <property type="entry name" value="3-DEHYDROQUINATE SYNTHASE, CHLOROPLASTIC"/>
    <property type="match status" value="1"/>
</dbReference>
<dbReference type="Pfam" id="PF01761">
    <property type="entry name" value="DHQ_synthase"/>
    <property type="match status" value="1"/>
</dbReference>
<dbReference type="Pfam" id="PF24621">
    <property type="entry name" value="DHQS_C"/>
    <property type="match status" value="1"/>
</dbReference>
<dbReference type="PIRSF" id="PIRSF001455">
    <property type="entry name" value="DHQ_synth"/>
    <property type="match status" value="1"/>
</dbReference>
<dbReference type="SUPFAM" id="SSF56796">
    <property type="entry name" value="Dehydroquinate synthase-like"/>
    <property type="match status" value="1"/>
</dbReference>
<proteinExistence type="inferred from homology"/>
<sequence>MLCVNVELRERSYPIHIGMGLLSEAQVYPLKKGDKVMIVTNPTIAQYYLSSVTDTLEKIGCSVENVQLPEGEQYKTLESLDLIFTALLKANHGRDTSIIALGGGVIGDIAGYAAASYQRGVRFIQIPTTLLAQVDSSVGGKTAVNHKLGKNMIGAFYQPCAVIIDTLTLTTLPKREIHAGLAEVIKYGAILDDEFFTWLEKHITNLVALEQQYLQQCIARCCQIKADVVTRDETEKGERALLNLGHTFGHAIETHLGYGNWLHGEAVATGMMIAAILSNKLGDLSLNDVTRLEKLLIQADLPTASPDTMKAEDYLPHMMRDKKVLAGKLRLVLLKSLGQAYVATDTDKEYVLDAIRTCSKKS</sequence>
<reference key="1">
    <citation type="journal article" date="2007" name="J. Bacteriol.">
        <title>Complete genome sequence of Haemophilus somnus (Histophilus somni) strain 129Pt and comparison to Haemophilus ducreyi 35000HP and Haemophilus influenzae Rd.</title>
        <authorList>
            <person name="Challacombe J.F."/>
            <person name="Duncan A.J."/>
            <person name="Brettin T.S."/>
            <person name="Bruce D."/>
            <person name="Chertkov O."/>
            <person name="Detter J.C."/>
            <person name="Han C.S."/>
            <person name="Misra M."/>
            <person name="Richardson P."/>
            <person name="Tapia R."/>
            <person name="Thayer N."/>
            <person name="Xie G."/>
            <person name="Inzana T.J."/>
        </authorList>
    </citation>
    <scope>NUCLEOTIDE SEQUENCE [LARGE SCALE GENOMIC DNA]</scope>
    <source>
        <strain>129Pt</strain>
    </source>
</reference>
<comment type="function">
    <text evidence="1">Catalyzes the conversion of 3-deoxy-D-arabino-heptulosonate 7-phosphate (DAHP) to dehydroquinate (DHQ).</text>
</comment>
<comment type="catalytic activity">
    <reaction evidence="1">
        <text>7-phospho-2-dehydro-3-deoxy-D-arabino-heptonate = 3-dehydroquinate + phosphate</text>
        <dbReference type="Rhea" id="RHEA:21968"/>
        <dbReference type="ChEBI" id="CHEBI:32364"/>
        <dbReference type="ChEBI" id="CHEBI:43474"/>
        <dbReference type="ChEBI" id="CHEBI:58394"/>
        <dbReference type="EC" id="4.2.3.4"/>
    </reaction>
</comment>
<comment type="cofactor">
    <cofactor evidence="1">
        <name>Co(2+)</name>
        <dbReference type="ChEBI" id="CHEBI:48828"/>
    </cofactor>
    <cofactor evidence="1">
        <name>Zn(2+)</name>
        <dbReference type="ChEBI" id="CHEBI:29105"/>
    </cofactor>
    <text evidence="1">Binds 1 divalent metal cation per subunit. Can use either Co(2+) or Zn(2+).</text>
</comment>
<comment type="cofactor">
    <cofactor evidence="1">
        <name>NAD(+)</name>
        <dbReference type="ChEBI" id="CHEBI:57540"/>
    </cofactor>
</comment>
<comment type="pathway">
    <text evidence="1">Metabolic intermediate biosynthesis; chorismate biosynthesis; chorismate from D-erythrose 4-phosphate and phosphoenolpyruvate: step 2/7.</text>
</comment>
<comment type="subcellular location">
    <subcellularLocation>
        <location evidence="1">Cytoplasm</location>
    </subcellularLocation>
</comment>
<comment type="similarity">
    <text evidence="1">Belongs to the sugar phosphate cyclases superfamily. Dehydroquinate synthase family.</text>
</comment>
<accession>Q0I432</accession>
<keyword id="KW-0028">Amino-acid biosynthesis</keyword>
<keyword id="KW-0057">Aromatic amino acid biosynthesis</keyword>
<keyword id="KW-0170">Cobalt</keyword>
<keyword id="KW-0963">Cytoplasm</keyword>
<keyword id="KW-0456">Lyase</keyword>
<keyword id="KW-0479">Metal-binding</keyword>
<keyword id="KW-0520">NAD</keyword>
<keyword id="KW-0547">Nucleotide-binding</keyword>
<keyword id="KW-0862">Zinc</keyword>
<evidence type="ECO:0000255" key="1">
    <source>
        <dbReference type="HAMAP-Rule" id="MF_00110"/>
    </source>
</evidence>